<feature type="initiator methionine" description="Removed" evidence="3">
    <location>
        <position position="1"/>
    </location>
</feature>
<feature type="chain" id="PRO_0000120732" description="Importin subunit alpha-1">
    <location>
        <begin position="2"/>
        <end position="523"/>
    </location>
</feature>
<feature type="domain" description="IBB" evidence="1">
    <location>
        <begin position="2"/>
        <end position="57"/>
    </location>
</feature>
<feature type="repeat" description="ARM 1">
    <location>
        <begin position="109"/>
        <end position="151"/>
    </location>
</feature>
<feature type="repeat" description="ARM 2">
    <location>
        <begin position="152"/>
        <end position="196"/>
    </location>
</feature>
<feature type="repeat" description="ARM 3">
    <location>
        <begin position="197"/>
        <end position="235"/>
    </location>
</feature>
<feature type="repeat" description="ARM 4">
    <location>
        <begin position="236"/>
        <end position="280"/>
    </location>
</feature>
<feature type="repeat" description="ARM 5">
    <location>
        <begin position="281"/>
        <end position="320"/>
    </location>
</feature>
<feature type="repeat" description="ARM 6">
    <location>
        <begin position="321"/>
        <end position="362"/>
    </location>
</feature>
<feature type="repeat" description="ARM 7">
    <location>
        <begin position="363"/>
        <end position="402"/>
    </location>
</feature>
<feature type="repeat" description="ARM 8">
    <location>
        <begin position="403"/>
        <end position="447"/>
    </location>
</feature>
<feature type="region of interest" description="Disordered" evidence="2">
    <location>
        <begin position="1"/>
        <end position="22"/>
    </location>
</feature>
<feature type="compositionally biased region" description="Basic and acidic residues" evidence="2">
    <location>
        <begin position="7"/>
        <end position="22"/>
    </location>
</feature>
<feature type="sequence conflict" description="In Ref. 1; AA sequence." evidence="4" ref="1">
    <original>T</original>
    <variation>P</variation>
    <location>
        <position position="309"/>
    </location>
</feature>
<proteinExistence type="evidence at protein level"/>
<protein>
    <recommendedName>
        <fullName>Importin subunit alpha-1</fullName>
    </recommendedName>
    <alternativeName>
        <fullName>Karyopherin subunit alpha-2</fullName>
    </alternativeName>
</protein>
<dbReference type="EMBL" id="L36340">
    <property type="protein sequence ID" value="AAC14196.1"/>
    <property type="molecule type" value="mRNA"/>
</dbReference>
<dbReference type="PIR" id="B55194">
    <property type="entry name" value="B55194"/>
</dbReference>
<dbReference type="SMR" id="P52171"/>
<dbReference type="AGR" id="Xenbase:XB-GENE-17334456"/>
<dbReference type="Xenbase" id="XB-GENE-17334456">
    <property type="gene designation" value="kpna7.L"/>
</dbReference>
<dbReference type="CD-CODE" id="78E86D56">
    <property type="entry name" value="Mitochondrial cloud"/>
</dbReference>
<dbReference type="Proteomes" id="UP000186698">
    <property type="component" value="Unplaced"/>
</dbReference>
<dbReference type="GO" id="GO:0005737">
    <property type="term" value="C:cytoplasm"/>
    <property type="evidence" value="ECO:0007669"/>
    <property type="project" value="UniProtKB-SubCell"/>
</dbReference>
<dbReference type="GO" id="GO:0005634">
    <property type="term" value="C:nucleus"/>
    <property type="evidence" value="ECO:0000318"/>
    <property type="project" value="GO_Central"/>
</dbReference>
<dbReference type="GO" id="GO:0061608">
    <property type="term" value="F:nuclear import signal receptor activity"/>
    <property type="evidence" value="ECO:0000318"/>
    <property type="project" value="GO_Central"/>
</dbReference>
<dbReference type="GO" id="GO:0008139">
    <property type="term" value="F:nuclear localization sequence binding"/>
    <property type="evidence" value="ECO:0000318"/>
    <property type="project" value="GO_Central"/>
</dbReference>
<dbReference type="GO" id="GO:0006607">
    <property type="term" value="P:NLS-bearing protein import into nucleus"/>
    <property type="evidence" value="ECO:0000318"/>
    <property type="project" value="GO_Central"/>
</dbReference>
<dbReference type="FunFam" id="1.25.10.10:FF:000009">
    <property type="entry name" value="Importin subunit alpha"/>
    <property type="match status" value="1"/>
</dbReference>
<dbReference type="Gene3D" id="1.20.5.690">
    <property type="entry name" value="Importin-alpha, importin-beta-binding domain"/>
    <property type="match status" value="1"/>
</dbReference>
<dbReference type="Gene3D" id="1.25.10.10">
    <property type="entry name" value="Leucine-rich Repeat Variant"/>
    <property type="match status" value="1"/>
</dbReference>
<dbReference type="InterPro" id="IPR011989">
    <property type="entry name" value="ARM-like"/>
</dbReference>
<dbReference type="InterPro" id="IPR016024">
    <property type="entry name" value="ARM-type_fold"/>
</dbReference>
<dbReference type="InterPro" id="IPR032413">
    <property type="entry name" value="Arm_3"/>
</dbReference>
<dbReference type="InterPro" id="IPR000225">
    <property type="entry name" value="Armadillo"/>
</dbReference>
<dbReference type="InterPro" id="IPR002652">
    <property type="entry name" value="Importin-a_IBB"/>
</dbReference>
<dbReference type="InterPro" id="IPR036975">
    <property type="entry name" value="Importin-a_IBB_sf"/>
</dbReference>
<dbReference type="InterPro" id="IPR024931">
    <property type="entry name" value="Importin_alpha"/>
</dbReference>
<dbReference type="PANTHER" id="PTHR23316">
    <property type="entry name" value="IMPORTIN ALPHA"/>
    <property type="match status" value="1"/>
</dbReference>
<dbReference type="Pfam" id="PF00514">
    <property type="entry name" value="Arm"/>
    <property type="match status" value="8"/>
</dbReference>
<dbReference type="Pfam" id="PF16186">
    <property type="entry name" value="Arm_3"/>
    <property type="match status" value="1"/>
</dbReference>
<dbReference type="Pfam" id="PF01749">
    <property type="entry name" value="IBB"/>
    <property type="match status" value="1"/>
</dbReference>
<dbReference type="PIRSF" id="PIRSF005673">
    <property type="entry name" value="Importin_alpha"/>
    <property type="match status" value="1"/>
</dbReference>
<dbReference type="SMART" id="SM00185">
    <property type="entry name" value="ARM"/>
    <property type="match status" value="8"/>
</dbReference>
<dbReference type="SUPFAM" id="SSF48371">
    <property type="entry name" value="ARM repeat"/>
    <property type="match status" value="1"/>
</dbReference>
<dbReference type="PROSITE" id="PS50176">
    <property type="entry name" value="ARM_REPEAT"/>
    <property type="match status" value="3"/>
</dbReference>
<dbReference type="PROSITE" id="PS51214">
    <property type="entry name" value="IBB"/>
    <property type="match status" value="1"/>
</dbReference>
<reference key="1">
    <citation type="journal article" date="1994" name="Cell">
        <title>Isolation of a protein that is essential for the first step of nuclear protein import.</title>
        <authorList>
            <person name="Goerlich D."/>
            <person name="Prehn S."/>
            <person name="Laskey R.A."/>
            <person name="Hartmann E."/>
        </authorList>
    </citation>
    <scope>NUCLEOTIDE SEQUENCE [MRNA]</scope>
    <scope>PROTEIN SEQUENCE OF 2-55; 296-332; 342-346 AND 507-523</scope>
    <source>
        <tissue>Ovary</tissue>
    </source>
</reference>
<comment type="function">
    <text>It is essential for selective protein import into nucleus. Promotes signal-dependent binding of karyophilic proteins to the nuclear envelope.</text>
</comment>
<comment type="subunit">
    <text>Forms a complex with importin subunit beta-1.</text>
</comment>
<comment type="subcellular location">
    <subcellularLocation>
        <location>Cytoplasm</location>
    </subcellularLocation>
</comment>
<comment type="similarity">
    <text evidence="4">Belongs to the importin alpha family.</text>
</comment>
<name>IMA1_XENLA</name>
<evidence type="ECO:0000255" key="1">
    <source>
        <dbReference type="PROSITE-ProRule" id="PRU00561"/>
    </source>
</evidence>
<evidence type="ECO:0000256" key="2">
    <source>
        <dbReference type="SAM" id="MobiDB-lite"/>
    </source>
</evidence>
<evidence type="ECO:0000269" key="3">
    <source>
    </source>
</evidence>
<evidence type="ECO:0000305" key="4"/>
<accession>P52171</accession>
<sequence length="523" mass="57885">MPTTNEADERMRKFKNKGKDTAELRRRRVEVSVELRKAKKDEQILKRRNVCFPEELILSPEKNAMQSIQVPQLSLEEIVQGMNSGDNENELRSTQAARKMLSKERNPPLNDIIEAGLIPKLVEFLSYHNNSTLQFEAAWALTNIASGTSDQTKSVVDGGAIPAFISLISSPHLHISEQAVWALGNIAGDGPLYRDALISCNVIPPLLTLVNPQTPLGYLRNITWTLSNLCRNKNPYPPMSAVLQILPVLTQLMLHEDKDILSDTCWAMSYLTDGSNDRIDVVVKTGLVERLIQLMYSPELSILTPSLRTVGNIVTGTDKQTQAAIDAGVLSVLPQLLRHQKPSIQKEAAWALSNIAAGPAPQIQQMITCGLLSPLVDLLKKGDFKAQKEAVWAVTNYTSGGTVEQVVQLVQCGVLEPLLNLLTIKDSKTILVILDAISNIFLAAEKLGEQEKLCLLVEELGGLEKIEALQTHDNRMVYHAALALIEKYFSGEEADEMNALEPEVGNDAYTFQVPNMQKESFKF</sequence>
<gene>
    <name type="primary">kpna2</name>
</gene>
<keyword id="KW-0963">Cytoplasm</keyword>
<keyword id="KW-0903">Direct protein sequencing</keyword>
<keyword id="KW-0653">Protein transport</keyword>
<keyword id="KW-1185">Reference proteome</keyword>
<keyword id="KW-0677">Repeat</keyword>
<keyword id="KW-0813">Transport</keyword>
<organism>
    <name type="scientific">Xenopus laevis</name>
    <name type="common">African clawed frog</name>
    <dbReference type="NCBI Taxonomy" id="8355"/>
    <lineage>
        <taxon>Eukaryota</taxon>
        <taxon>Metazoa</taxon>
        <taxon>Chordata</taxon>
        <taxon>Craniata</taxon>
        <taxon>Vertebrata</taxon>
        <taxon>Euteleostomi</taxon>
        <taxon>Amphibia</taxon>
        <taxon>Batrachia</taxon>
        <taxon>Anura</taxon>
        <taxon>Pipoidea</taxon>
        <taxon>Pipidae</taxon>
        <taxon>Xenopodinae</taxon>
        <taxon>Xenopus</taxon>
        <taxon>Xenopus</taxon>
    </lineage>
</organism>